<keyword id="KW-0961">Cell wall biogenesis/degradation</keyword>
<keyword id="KW-0325">Glycoprotein</keyword>
<keyword id="KW-0328">Glycosyltransferase</keyword>
<keyword id="KW-0333">Golgi apparatus</keyword>
<keyword id="KW-0472">Membrane</keyword>
<keyword id="KW-1185">Reference proteome</keyword>
<keyword id="KW-0735">Signal-anchor</keyword>
<keyword id="KW-0808">Transferase</keyword>
<keyword id="KW-0812">Transmembrane</keyword>
<keyword id="KW-1133">Transmembrane helix</keyword>
<accession>O81053</accession>
<accession>Q1PFA3</accession>
<protein>
    <recommendedName>
        <fullName>Fucosyltransferase 2</fullName>
        <shortName>AtFUT2</shortName>
        <ecNumber>2.4.1.-</ecNumber>
    </recommendedName>
</protein>
<reference key="1">
    <citation type="journal article" date="1999" name="Nature">
        <title>Sequence and analysis of chromosome 2 of the plant Arabidopsis thaliana.</title>
        <authorList>
            <person name="Lin X."/>
            <person name="Kaul S."/>
            <person name="Rounsley S.D."/>
            <person name="Shea T.P."/>
            <person name="Benito M.-I."/>
            <person name="Town C.D."/>
            <person name="Fujii C.Y."/>
            <person name="Mason T.M."/>
            <person name="Bowman C.L."/>
            <person name="Barnstead M.E."/>
            <person name="Feldblyum T.V."/>
            <person name="Buell C.R."/>
            <person name="Ketchum K.A."/>
            <person name="Lee J.J."/>
            <person name="Ronning C.M."/>
            <person name="Koo H.L."/>
            <person name="Moffat K.S."/>
            <person name="Cronin L.A."/>
            <person name="Shen M."/>
            <person name="Pai G."/>
            <person name="Van Aken S."/>
            <person name="Umayam L."/>
            <person name="Tallon L.J."/>
            <person name="Gill J.E."/>
            <person name="Adams M.D."/>
            <person name="Carrera A.J."/>
            <person name="Creasy T.H."/>
            <person name="Goodman H.M."/>
            <person name="Somerville C.R."/>
            <person name="Copenhaver G.P."/>
            <person name="Preuss D."/>
            <person name="Nierman W.C."/>
            <person name="White O."/>
            <person name="Eisen J.A."/>
            <person name="Salzberg S.L."/>
            <person name="Fraser C.M."/>
            <person name="Venter J.C."/>
        </authorList>
    </citation>
    <scope>NUCLEOTIDE SEQUENCE [LARGE SCALE GENOMIC DNA]</scope>
    <source>
        <strain>cv. Columbia</strain>
    </source>
</reference>
<reference key="2">
    <citation type="journal article" date="2017" name="Plant J.">
        <title>Araport11: a complete reannotation of the Arabidopsis thaliana reference genome.</title>
        <authorList>
            <person name="Cheng C.Y."/>
            <person name="Krishnakumar V."/>
            <person name="Chan A.P."/>
            <person name="Thibaud-Nissen F."/>
            <person name="Schobel S."/>
            <person name="Town C.D."/>
        </authorList>
    </citation>
    <scope>GENOME REANNOTATION</scope>
    <source>
        <strain>cv. Columbia</strain>
    </source>
</reference>
<reference key="3">
    <citation type="journal article" date="2006" name="Plant Biotechnol. J.">
        <title>Simultaneous high-throughput recombinational cloning of open reading frames in closed and open configurations.</title>
        <authorList>
            <person name="Underwood B.A."/>
            <person name="Vanderhaeghen R."/>
            <person name="Whitford R."/>
            <person name="Town C.D."/>
            <person name="Hilson P."/>
        </authorList>
    </citation>
    <scope>NUCLEOTIDE SEQUENCE [LARGE SCALE MRNA]</scope>
    <source>
        <strain>cv. Columbia</strain>
    </source>
</reference>
<reference key="4">
    <citation type="journal article" date="2001" name="Plant Physiol.">
        <title>Characterization of a family of Arabidopsis genes related to xyloglucan fucosyltransferase1.</title>
        <authorList>
            <person name="Sarria R."/>
            <person name="Wagner T.A."/>
            <person name="O'Neill M.A."/>
            <person name="Faik A."/>
            <person name="Wilkerson C.G."/>
            <person name="Keegstra K."/>
            <person name="Raikhel N.V."/>
        </authorList>
    </citation>
    <scope>IDENTIFICATION AS A PUTATIVE FUCOSYLTRANSFERASE</scope>
    <scope>TISSUE SPECIFICITY</scope>
</reference>
<reference key="5">
    <citation type="journal article" date="2009" name="J. Proteomics">
        <title>Phosphoproteomic analysis of nuclei-enriched fractions from Arabidopsis thaliana.</title>
        <authorList>
            <person name="Jones A.M.E."/>
            <person name="MacLean D."/>
            <person name="Studholme D.J."/>
            <person name="Serna-Sanz A."/>
            <person name="Andreasson E."/>
            <person name="Rathjen J.P."/>
            <person name="Peck S.C."/>
        </authorList>
    </citation>
    <scope>IDENTIFICATION BY MASS SPECTROMETRY [LARGE SCALE ANALYSIS]</scope>
    <source>
        <strain>cv. Columbia</strain>
    </source>
</reference>
<feature type="chain" id="PRO_0000193911" description="Fucosyltransferase 2">
    <location>
        <begin position="1"/>
        <end position="539"/>
    </location>
</feature>
<feature type="topological domain" description="Cytoplasmic" evidence="2">
    <location>
        <begin position="1"/>
        <end position="5"/>
    </location>
</feature>
<feature type="transmembrane region" description="Helical; Signal-anchor for type II membrane protein" evidence="2">
    <location>
        <begin position="6"/>
        <end position="26"/>
    </location>
</feature>
<feature type="topological domain" description="Lumenal" evidence="2">
    <location>
        <begin position="27"/>
        <end position="539"/>
    </location>
</feature>
<feature type="glycosylation site" description="N-linked (GlcNAc...) asparagine" evidence="2">
    <location>
        <position position="44"/>
    </location>
</feature>
<feature type="glycosylation site" description="N-linked (GlcNAc...) asparagine" evidence="2">
    <location>
        <position position="231"/>
    </location>
</feature>
<feature type="glycosylation site" description="N-linked (GlcNAc...) asparagine" evidence="2">
    <location>
        <position position="482"/>
    </location>
</feature>
<proteinExistence type="evidence at protein level"/>
<evidence type="ECO:0000250" key="1"/>
<evidence type="ECO:0000255" key="2"/>
<evidence type="ECO:0000269" key="3">
    <source>
    </source>
</evidence>
<evidence type="ECO:0000305" key="4"/>
<comment type="function">
    <text>May be involved in cell wall biosynthesis. May act as a fucosyltransferase.</text>
</comment>
<comment type="pathway">
    <text>Protein modification; protein glycosylation.</text>
</comment>
<comment type="subcellular location">
    <subcellularLocation>
        <location evidence="1">Golgi apparatus</location>
        <location evidence="1">Golgi stack membrane</location>
        <topology evidence="1">Single-pass type II membrane protein</topology>
    </subcellularLocation>
    <text evidence="1">Membrane-bound form in trans cisternae of Golgi.</text>
</comment>
<comment type="tissue specificity">
    <text evidence="3">Expressed in roots, stems, leaves, flowers, siliques and seedlings.</text>
</comment>
<comment type="similarity">
    <text evidence="4">Belongs to the glycosyltransferase 37 family.</text>
</comment>
<organism>
    <name type="scientific">Arabidopsis thaliana</name>
    <name type="common">Mouse-ear cress</name>
    <dbReference type="NCBI Taxonomy" id="3702"/>
    <lineage>
        <taxon>Eukaryota</taxon>
        <taxon>Viridiplantae</taxon>
        <taxon>Streptophyta</taxon>
        <taxon>Embryophyta</taxon>
        <taxon>Tracheophyta</taxon>
        <taxon>Spermatophyta</taxon>
        <taxon>Magnoliopsida</taxon>
        <taxon>eudicotyledons</taxon>
        <taxon>Gunneridae</taxon>
        <taxon>Pentapetalae</taxon>
        <taxon>rosids</taxon>
        <taxon>malvids</taxon>
        <taxon>Brassicales</taxon>
        <taxon>Brassicaceae</taxon>
        <taxon>Camelineae</taxon>
        <taxon>Arabidopsis</taxon>
    </lineage>
</organism>
<name>FUT2_ARATH</name>
<dbReference type="EC" id="2.4.1.-"/>
<dbReference type="EMBL" id="AC005313">
    <property type="protein sequence ID" value="AAC34481.1"/>
    <property type="molecule type" value="Genomic_DNA"/>
</dbReference>
<dbReference type="EMBL" id="CP002685">
    <property type="protein sequence ID" value="AEC05675.1"/>
    <property type="molecule type" value="Genomic_DNA"/>
</dbReference>
<dbReference type="EMBL" id="DQ446460">
    <property type="protein sequence ID" value="ABE65797.1"/>
    <property type="molecule type" value="mRNA"/>
</dbReference>
<dbReference type="PIR" id="T02705">
    <property type="entry name" value="T02705"/>
</dbReference>
<dbReference type="RefSeq" id="NP_178420.1">
    <property type="nucleotide sequence ID" value="NM_126372.1"/>
</dbReference>
<dbReference type="SMR" id="O81053"/>
<dbReference type="STRING" id="3702.O81053"/>
<dbReference type="CAZy" id="GT37">
    <property type="family name" value="Glycosyltransferase Family 37"/>
</dbReference>
<dbReference type="GlyCosmos" id="O81053">
    <property type="glycosylation" value="3 sites, No reported glycans"/>
</dbReference>
<dbReference type="GlyGen" id="O81053">
    <property type="glycosylation" value="3 sites"/>
</dbReference>
<dbReference type="PaxDb" id="3702-AT2G03210.1"/>
<dbReference type="ProteomicsDB" id="230479"/>
<dbReference type="EnsemblPlants" id="AT2G03210.1">
    <property type="protein sequence ID" value="AT2G03210.1"/>
    <property type="gene ID" value="AT2G03210"/>
</dbReference>
<dbReference type="GeneID" id="814850"/>
<dbReference type="Gramene" id="AT2G03210.1">
    <property type="protein sequence ID" value="AT2G03210.1"/>
    <property type="gene ID" value="AT2G03210"/>
</dbReference>
<dbReference type="KEGG" id="ath:AT2G03210"/>
<dbReference type="Araport" id="AT2G03210"/>
<dbReference type="TAIR" id="AT2G03210">
    <property type="gene designation" value="FUT2"/>
</dbReference>
<dbReference type="eggNOG" id="ENOG502QTTA">
    <property type="taxonomic scope" value="Eukaryota"/>
</dbReference>
<dbReference type="HOGENOM" id="CLU_001992_2_1_1"/>
<dbReference type="InParanoid" id="O81053"/>
<dbReference type="OMA" id="TRYYKAY"/>
<dbReference type="PhylomeDB" id="O81053"/>
<dbReference type="UniPathway" id="UPA00378"/>
<dbReference type="PRO" id="PR:O81053"/>
<dbReference type="Proteomes" id="UP000006548">
    <property type="component" value="Chromosome 2"/>
</dbReference>
<dbReference type="ExpressionAtlas" id="O81053">
    <property type="expression patterns" value="baseline and differential"/>
</dbReference>
<dbReference type="GO" id="GO:0032580">
    <property type="term" value="C:Golgi cisterna membrane"/>
    <property type="evidence" value="ECO:0007669"/>
    <property type="project" value="UniProtKB-SubCell"/>
</dbReference>
<dbReference type="GO" id="GO:0008417">
    <property type="term" value="F:fucosyltransferase activity"/>
    <property type="evidence" value="ECO:0000250"/>
    <property type="project" value="TAIR"/>
</dbReference>
<dbReference type="GO" id="GO:0008107">
    <property type="term" value="F:galactoside 2-alpha-L-fucosyltransferase activity"/>
    <property type="evidence" value="ECO:0007669"/>
    <property type="project" value="InterPro"/>
</dbReference>
<dbReference type="GO" id="GO:0042546">
    <property type="term" value="P:cell wall biogenesis"/>
    <property type="evidence" value="ECO:0007669"/>
    <property type="project" value="InterPro"/>
</dbReference>
<dbReference type="GO" id="GO:0071555">
    <property type="term" value="P:cell wall organization"/>
    <property type="evidence" value="ECO:0007669"/>
    <property type="project" value="UniProtKB-KW"/>
</dbReference>
<dbReference type="GO" id="GO:0006486">
    <property type="term" value="P:protein glycosylation"/>
    <property type="evidence" value="ECO:0007669"/>
    <property type="project" value="UniProtKB-UniPathway"/>
</dbReference>
<dbReference type="FunFam" id="3.40.50.11340:FF:000005">
    <property type="entry name" value="Galactoside 2-alpha-L-fucosyltransferase"/>
    <property type="match status" value="1"/>
</dbReference>
<dbReference type="Gene3D" id="3.40.50.11340">
    <property type="match status" value="1"/>
</dbReference>
<dbReference type="InterPro" id="IPR004938">
    <property type="entry name" value="XG_FTase"/>
</dbReference>
<dbReference type="PANTHER" id="PTHR31889:SF80">
    <property type="entry name" value="FUCOSYLTRANSFERASE 2"/>
    <property type="match status" value="1"/>
</dbReference>
<dbReference type="PANTHER" id="PTHR31889">
    <property type="entry name" value="FUCOSYLTRANSFERASE 2-RELATED"/>
    <property type="match status" value="1"/>
</dbReference>
<dbReference type="Pfam" id="PF03254">
    <property type="entry name" value="XG_FTase"/>
    <property type="match status" value="1"/>
</dbReference>
<gene>
    <name type="primary">FUT2</name>
    <name type="ordered locus">At2g03210</name>
    <name type="ORF">T18E12.12</name>
</gene>
<sequence>MRITEILALFMVLVPVSLVIVAMFGYDQGNGFVQASRFITMEPNVTSSSDDSSLVQRDQEQKDSVDMSLLGGLLVSGFKKESCLSRYQSYLYRKASPYKPSLHLLSKLRAYEELHKRCGPGTRQYTNAERLLKQKQTGEMESQGCKYVVWMSFSGLGNRIISIASVFLYAMLTDRVLLVEGGEQFADLFCEPFLDTTWLLPKDFTLASQFSGFGQNSAHCHGDMLKRKLINESSVSSLSHLYLHLAHDYNEHDKMFFCEEDQNLLKNVPWLIMRTNNFFAPSLFLISSFEEELGMMFPEKGTVFHHLGRYLFHPSNQVWGLITRYYQAYLAKADERIGLQIRVFDEKSGVSPRVTKQIISCVQNENLLPRLSKGEEQYKQPSEEELKLKSVLVTSLTTGYFEILKTMYWENPTVTRDVIGIHQPSHEGHQQTEKLMHNRKAWAEMYLLSLTDKLVISAWSTFGYVAQGLGGLRAWILYKQENQTNPNPPCGRAMSPDPCFHAPPYYDCKAKKGTDTGNVVPHVRHCEDISWGLKLVDNF</sequence>